<feature type="chain" id="PRO_0000326798" description="Acylphosphatase">
    <location>
        <begin position="1"/>
        <end position="92"/>
    </location>
</feature>
<feature type="domain" description="Acylphosphatase-like" evidence="1">
    <location>
        <begin position="5"/>
        <end position="92"/>
    </location>
</feature>
<feature type="active site" evidence="1">
    <location>
        <position position="20"/>
    </location>
</feature>
<feature type="active site" evidence="1">
    <location>
        <position position="38"/>
    </location>
</feature>
<evidence type="ECO:0000255" key="1">
    <source>
        <dbReference type="HAMAP-Rule" id="MF_01450"/>
    </source>
</evidence>
<dbReference type="EC" id="3.6.1.7" evidence="1"/>
<dbReference type="EMBL" id="CP000826">
    <property type="protein sequence ID" value="ABV40869.1"/>
    <property type="molecule type" value="Genomic_DNA"/>
</dbReference>
<dbReference type="SMR" id="A8GCM9"/>
<dbReference type="STRING" id="399741.Spro_1765"/>
<dbReference type="KEGG" id="spe:Spro_1765"/>
<dbReference type="eggNOG" id="COG1254">
    <property type="taxonomic scope" value="Bacteria"/>
</dbReference>
<dbReference type="HOGENOM" id="CLU_141932_1_2_6"/>
<dbReference type="OrthoDB" id="5295388at2"/>
<dbReference type="GO" id="GO:0003998">
    <property type="term" value="F:acylphosphatase activity"/>
    <property type="evidence" value="ECO:0007669"/>
    <property type="project" value="UniProtKB-UniRule"/>
</dbReference>
<dbReference type="FunFam" id="3.30.70.100:FF:000012">
    <property type="entry name" value="Acylphosphatase"/>
    <property type="match status" value="1"/>
</dbReference>
<dbReference type="Gene3D" id="3.30.70.100">
    <property type="match status" value="1"/>
</dbReference>
<dbReference type="HAMAP" id="MF_01450">
    <property type="entry name" value="Acylphosphatase_entero"/>
    <property type="match status" value="1"/>
</dbReference>
<dbReference type="InterPro" id="IPR020456">
    <property type="entry name" value="Acylphosphatase"/>
</dbReference>
<dbReference type="InterPro" id="IPR001792">
    <property type="entry name" value="Acylphosphatase-like_dom"/>
</dbReference>
<dbReference type="InterPro" id="IPR036046">
    <property type="entry name" value="Acylphosphatase-like_dom_sf"/>
</dbReference>
<dbReference type="InterPro" id="IPR028627">
    <property type="entry name" value="Acylphosphatase_bac"/>
</dbReference>
<dbReference type="InterPro" id="IPR017968">
    <property type="entry name" value="Acylphosphatase_CS"/>
</dbReference>
<dbReference type="NCBIfam" id="NF011000">
    <property type="entry name" value="PRK14426.1"/>
    <property type="match status" value="1"/>
</dbReference>
<dbReference type="NCBIfam" id="NF011022">
    <property type="entry name" value="PRK14451.1"/>
    <property type="match status" value="1"/>
</dbReference>
<dbReference type="PANTHER" id="PTHR47268">
    <property type="entry name" value="ACYLPHOSPHATASE"/>
    <property type="match status" value="1"/>
</dbReference>
<dbReference type="PANTHER" id="PTHR47268:SF4">
    <property type="entry name" value="ACYLPHOSPHATASE"/>
    <property type="match status" value="1"/>
</dbReference>
<dbReference type="Pfam" id="PF00708">
    <property type="entry name" value="Acylphosphatase"/>
    <property type="match status" value="1"/>
</dbReference>
<dbReference type="PRINTS" id="PR00112">
    <property type="entry name" value="ACYLPHPHTASE"/>
</dbReference>
<dbReference type="SUPFAM" id="SSF54975">
    <property type="entry name" value="Acylphosphatase/BLUF domain-like"/>
    <property type="match status" value="1"/>
</dbReference>
<dbReference type="PROSITE" id="PS00150">
    <property type="entry name" value="ACYLPHOSPHATASE_1"/>
    <property type="match status" value="1"/>
</dbReference>
<dbReference type="PROSITE" id="PS00151">
    <property type="entry name" value="ACYLPHOSPHATASE_2"/>
    <property type="match status" value="1"/>
</dbReference>
<dbReference type="PROSITE" id="PS51160">
    <property type="entry name" value="ACYLPHOSPHATASE_3"/>
    <property type="match status" value="1"/>
</dbReference>
<proteinExistence type="inferred from homology"/>
<accession>A8GCM9</accession>
<organism>
    <name type="scientific">Serratia proteamaculans (strain 568)</name>
    <dbReference type="NCBI Taxonomy" id="399741"/>
    <lineage>
        <taxon>Bacteria</taxon>
        <taxon>Pseudomonadati</taxon>
        <taxon>Pseudomonadota</taxon>
        <taxon>Gammaproteobacteria</taxon>
        <taxon>Enterobacterales</taxon>
        <taxon>Yersiniaceae</taxon>
        <taxon>Serratia</taxon>
    </lineage>
</organism>
<comment type="catalytic activity">
    <reaction evidence="1">
        <text>an acyl phosphate + H2O = a carboxylate + phosphate + H(+)</text>
        <dbReference type="Rhea" id="RHEA:14965"/>
        <dbReference type="ChEBI" id="CHEBI:15377"/>
        <dbReference type="ChEBI" id="CHEBI:15378"/>
        <dbReference type="ChEBI" id="CHEBI:29067"/>
        <dbReference type="ChEBI" id="CHEBI:43474"/>
        <dbReference type="ChEBI" id="CHEBI:59918"/>
        <dbReference type="EC" id="3.6.1.7"/>
    </reaction>
</comment>
<comment type="similarity">
    <text evidence="1">Belongs to the acylphosphatase family.</text>
</comment>
<reference key="1">
    <citation type="submission" date="2007-09" db="EMBL/GenBank/DDBJ databases">
        <title>Complete sequence of chromosome of Serratia proteamaculans 568.</title>
        <authorList>
            <consortium name="US DOE Joint Genome Institute"/>
            <person name="Copeland A."/>
            <person name="Lucas S."/>
            <person name="Lapidus A."/>
            <person name="Barry K."/>
            <person name="Glavina del Rio T."/>
            <person name="Dalin E."/>
            <person name="Tice H."/>
            <person name="Pitluck S."/>
            <person name="Chain P."/>
            <person name="Malfatti S."/>
            <person name="Shin M."/>
            <person name="Vergez L."/>
            <person name="Schmutz J."/>
            <person name="Larimer F."/>
            <person name="Land M."/>
            <person name="Hauser L."/>
            <person name="Kyrpides N."/>
            <person name="Kim E."/>
            <person name="Taghavi S."/>
            <person name="Newman L."/>
            <person name="Vangronsveld J."/>
            <person name="van der Lelie D."/>
            <person name="Richardson P."/>
        </authorList>
    </citation>
    <scope>NUCLEOTIDE SEQUENCE [LARGE SCALE GENOMIC DNA]</scope>
    <source>
        <strain>568</strain>
    </source>
</reference>
<gene>
    <name type="primary">acyP</name>
    <name type="ordered locus">Spro_1765</name>
</gene>
<sequence length="92" mass="10035">MTQVCIAAYVYGVVQGVGFRYNTQHQATALGLSGYARNLDDGSVEVLACGEQPQVDKLVEWLKNGGPRSARVDRVLVEPRGAADFQGFSIRY</sequence>
<name>ACYP_SERP5</name>
<keyword id="KW-0378">Hydrolase</keyword>
<protein>
    <recommendedName>
        <fullName evidence="1">Acylphosphatase</fullName>
        <ecNumber evidence="1">3.6.1.7</ecNumber>
    </recommendedName>
    <alternativeName>
        <fullName evidence="1">Acylphosphate phosphohydrolase</fullName>
    </alternativeName>
</protein>